<protein>
    <recommendedName>
        <fullName evidence="4">Nuclear matrix constituent protein 1b</fullName>
        <shortName evidence="4">OsNMCP1b</shortName>
    </recommendedName>
    <alternativeName>
        <fullName evidence="5">Nuclear matrix constituent protein 1</fullName>
        <shortName evidence="5">OsNMCP1</shortName>
    </alternativeName>
</protein>
<gene>
    <name evidence="4" type="primary">NMCP1B</name>
    <name evidence="5" type="synonym">NMCP1</name>
    <name evidence="10" type="ordered locus">Os01g0767000</name>
    <name evidence="6" type="ordered locus">LOC_Os01g56140</name>
    <name evidence="9" type="ORF">B1143G03.1</name>
    <name evidence="11" type="ORF">OsJ_03582</name>
    <name evidence="8" type="ORF">OSJNBb0053G03.15</name>
</gene>
<organism>
    <name type="scientific">Oryza sativa subsp. japonica</name>
    <name type="common">Rice</name>
    <dbReference type="NCBI Taxonomy" id="39947"/>
    <lineage>
        <taxon>Eukaryota</taxon>
        <taxon>Viridiplantae</taxon>
        <taxon>Streptophyta</taxon>
        <taxon>Embryophyta</taxon>
        <taxon>Tracheophyta</taxon>
        <taxon>Spermatophyta</taxon>
        <taxon>Magnoliopsida</taxon>
        <taxon>Liliopsida</taxon>
        <taxon>Poales</taxon>
        <taxon>Poaceae</taxon>
        <taxon>BOP clade</taxon>
        <taxon>Oryzoideae</taxon>
        <taxon>Oryzeae</taxon>
        <taxon>Oryzinae</taxon>
        <taxon>Oryza</taxon>
        <taxon>Oryza sativa</taxon>
    </lineage>
</organism>
<proteinExistence type="evidence at protein level"/>
<sequence length="987" mass="113614">MASPRSAGGVGGGGGGGGGSGGAAAGDDAIWSKLREAGFDEESLKRRDKAALIAYISRLESEIYQYQHNLGLVLMERKELTSKHEQLRAASESAEIMHKRERAAQQSALAEARKKEENLKKSLGIQKECVANLEKALHDMRGETAETKVSYESKLAEALQLMEAAHKKFDEAEEKLLLAKSLEAESIRTHNAALRSLHDIDDREDQLRRDRISCELENEAKEKEISLQRKSLNDMKKILHEKEEVLLKEQALLNQRDENILERLAYVTHSEKRVEEEKNILEAERKVLLEEKYKLELKMEAIVSREEALIQKESLLDKRESELLILQETIASKERAEIERLNQEQAIALERRKHDFESEMANKQMSFDAAMEVTRNALHQRECALSEQESVVVQRSQNLDLQLAELASKEKALAGRSDELKEEEEKLLLHREAIHNELQKEREEIQRIKSDLEKEKAFFEEEKREAIQAQQDLAITQADRDELLTLQMKLKEEIDSLRAQKRELMADADRLQAEKERFEIEWELIDEKKEELQKEAIRIAEERRAITEYLKNESDIIKQEKDNLRVQFKSNSETLSREHKEFMSKMQQEHASWLSKIQQERQDLKRDIDIQRVELLNSAKARQMEIDSYLREREEEFEQKKAKELEHINSQKEMINTKLEHVAVELQKLKDERKEATLERERREQELSEIKGTIEALNNQREKLQEQRKLLHSDREAITVQIQQLNVLEELKIDSENKQLSLLQHDKSKLGSDINVKDNHHDNSHSSPKQRFGRKLDLSPVSTPISWVRKCAQVIFKRSPEKSASHDQFVQNGVPKKVGDSVDVEDVNLDFAKVGQKRLNHLVSCDQTEVLEPKRKHRRSTIQKVNGGEITSNCLSALEEKCSKNEHDEAPLGLSNTCKEHEYGDKGPENLTKPGEPASSVDVPYVNGIVDNSDSVQEEPSVEATVSATETSNVDGPEDNNDSDEEDEEEEEEKTSSAKKLWRFLIT</sequence>
<name>NMCPB_ORYSJ</name>
<keyword id="KW-0175">Coiled coil</keyword>
<keyword id="KW-0341">Growth regulation</keyword>
<keyword id="KW-0539">Nucleus</keyword>
<keyword id="KW-1185">Reference proteome</keyword>
<keyword id="KW-0346">Stress response</keyword>
<accession>Q0JJ05</accession>
<accession>A0A0P0V8N9</accession>
<accession>Q8LIX8</accession>
<dbReference type="EMBL" id="AB110205">
    <property type="protein sequence ID" value="BAC78597.1"/>
    <property type="molecule type" value="mRNA"/>
</dbReference>
<dbReference type="EMBL" id="AP003377">
    <property type="protein sequence ID" value="BAC10761.1"/>
    <property type="molecule type" value="Genomic_DNA"/>
</dbReference>
<dbReference type="EMBL" id="AP003371">
    <property type="protein sequence ID" value="BAD53323.1"/>
    <property type="molecule type" value="Genomic_DNA"/>
</dbReference>
<dbReference type="EMBL" id="AP008207">
    <property type="protein sequence ID" value="BAF06273.1"/>
    <property type="molecule type" value="Genomic_DNA"/>
</dbReference>
<dbReference type="EMBL" id="AP014957">
    <property type="protein sequence ID" value="BAS74518.1"/>
    <property type="status" value="ALT_SEQ"/>
    <property type="molecule type" value="Genomic_DNA"/>
</dbReference>
<dbReference type="EMBL" id="CM000138">
    <property type="protein sequence ID" value="EAZ13665.1"/>
    <property type="molecule type" value="Genomic_DNA"/>
</dbReference>
<dbReference type="RefSeq" id="XP_015620456.1">
    <property type="nucleotide sequence ID" value="XM_015764970.1"/>
</dbReference>
<dbReference type="SMR" id="Q0JJ05"/>
<dbReference type="FunCoup" id="Q0JJ05">
    <property type="interactions" value="1039"/>
</dbReference>
<dbReference type="STRING" id="39947.A0A0P0V8N9"/>
<dbReference type="PaxDb" id="39947-A0A0P0V8N9"/>
<dbReference type="EnsemblPlants" id="Os01t0767000-01">
    <property type="protein sequence ID" value="Os01t0767000-01"/>
    <property type="gene ID" value="Os01g0767000"/>
</dbReference>
<dbReference type="Gramene" id="Os01t0767000-01">
    <property type="protein sequence ID" value="Os01t0767000-01"/>
    <property type="gene ID" value="Os01g0767000"/>
</dbReference>
<dbReference type="KEGG" id="dosa:Os01g0767000"/>
<dbReference type="eggNOG" id="ENOG502QT60">
    <property type="taxonomic scope" value="Eukaryota"/>
</dbReference>
<dbReference type="HOGENOM" id="CLU_1772894_0_0_1"/>
<dbReference type="InParanoid" id="Q0JJ05"/>
<dbReference type="OrthoDB" id="673795at2759"/>
<dbReference type="Proteomes" id="UP000000763">
    <property type="component" value="Chromosome 1"/>
</dbReference>
<dbReference type="Proteomes" id="UP000007752">
    <property type="component" value="Chromosome 1"/>
</dbReference>
<dbReference type="Proteomes" id="UP000059680">
    <property type="component" value="Chromosome 1"/>
</dbReference>
<dbReference type="GO" id="GO:0005652">
    <property type="term" value="C:nuclear lamina"/>
    <property type="evidence" value="ECO:0000314"/>
    <property type="project" value="UniProtKB"/>
</dbReference>
<dbReference type="GO" id="GO:0016363">
    <property type="term" value="C:nuclear matrix"/>
    <property type="evidence" value="ECO:0000314"/>
    <property type="project" value="UniProtKB"/>
</dbReference>
<dbReference type="GO" id="GO:0006997">
    <property type="term" value="P:nucleus organization"/>
    <property type="evidence" value="ECO:0007669"/>
    <property type="project" value="InterPro"/>
</dbReference>
<dbReference type="GO" id="GO:1902584">
    <property type="term" value="P:positive regulation of response to water deprivation"/>
    <property type="evidence" value="ECO:0000315"/>
    <property type="project" value="UniProtKB"/>
</dbReference>
<dbReference type="GO" id="GO:2000280">
    <property type="term" value="P:regulation of root development"/>
    <property type="evidence" value="ECO:0000315"/>
    <property type="project" value="UniProtKB"/>
</dbReference>
<dbReference type="InterPro" id="IPR040418">
    <property type="entry name" value="CRWN"/>
</dbReference>
<dbReference type="PANTHER" id="PTHR31908">
    <property type="entry name" value="PROTEIN CROWDED NUCLEI 4"/>
    <property type="match status" value="1"/>
</dbReference>
<dbReference type="PANTHER" id="PTHR31908:SF2">
    <property type="entry name" value="PROTEIN CROWDED NUCLEI 4"/>
    <property type="match status" value="1"/>
</dbReference>
<comment type="function">
    <text evidence="3 7">Architectural component of nuclear structure that plays different roles in controlling nuclear size and morphology (Probable). Involved in the modification of chromatin accessibility by interacting with SWI3C, a component of the chromatin-remodeling complex, to thus reduce the suppression effect of the complex (PubMed:32129897). Acts as positive regulator of drought resistance and modulates root growth (PubMed:32129897). Positively regulates the expression of genes related to root growth and drought resistance (PubMed:32129897).</text>
</comment>
<comment type="subunit">
    <text evidence="3">Interacts with SWI3C.</text>
</comment>
<comment type="subcellular location">
    <subcellularLocation>
        <location evidence="3">Nucleus matrix</location>
    </subcellularLocation>
    <subcellularLocation>
        <location evidence="3">Nucleus lamina</location>
    </subcellularLocation>
    <text evidence="3">Localizes predominantly at the nuclear periphery.</text>
</comment>
<comment type="induction">
    <text evidence="3">Induced by abscisic acid (ABA) and drought stress (at protein level).</text>
</comment>
<comment type="disruption phenotype">
    <text evidence="3">No visible phenotype under normal growth conditions, but mutant plants exhibit hypersensitivity to drought stress.</text>
</comment>
<comment type="miscellaneous">
    <text evidence="3">Plants overexpressing NMCP1 exhibit enhanced tolerance to drought stress.</text>
</comment>
<comment type="similarity">
    <text evidence="6">Belongs to the CRWN family.</text>
</comment>
<comment type="sequence caution" evidence="6">
    <conflict type="erroneous gene model prediction">
        <sequence resource="EMBL-CDS" id="BAS74518"/>
    </conflict>
</comment>
<evidence type="ECO:0000255" key="1"/>
<evidence type="ECO:0000256" key="2">
    <source>
        <dbReference type="SAM" id="MobiDB-lite"/>
    </source>
</evidence>
<evidence type="ECO:0000269" key="3">
    <source>
    </source>
</evidence>
<evidence type="ECO:0000303" key="4">
    <source>
    </source>
</evidence>
<evidence type="ECO:0000303" key="5">
    <source>
    </source>
</evidence>
<evidence type="ECO:0000305" key="6"/>
<evidence type="ECO:0000305" key="7">
    <source>
    </source>
</evidence>
<evidence type="ECO:0000312" key="8">
    <source>
        <dbReference type="EMBL" id="BAC10761.1"/>
    </source>
</evidence>
<evidence type="ECO:0000312" key="9">
    <source>
        <dbReference type="EMBL" id="BAD53323.1"/>
    </source>
</evidence>
<evidence type="ECO:0000312" key="10">
    <source>
        <dbReference type="EMBL" id="BAF06273.1"/>
    </source>
</evidence>
<evidence type="ECO:0000312" key="11">
    <source>
        <dbReference type="EMBL" id="EAZ13665.1"/>
    </source>
</evidence>
<reference key="1">
    <citation type="journal article" date="2005" name="Plant Cell">
        <title>Functional isolation of novel nuclear proteins showing a variety of subnuclear localizations.</title>
        <authorList>
            <person name="Moriguchi K."/>
            <person name="Suzuki T."/>
            <person name="Ito Y."/>
            <person name="Yamazaki Y."/>
            <person name="Niwa Y."/>
            <person name="Kurata N."/>
        </authorList>
    </citation>
    <scope>NUCLEOTIDE SEQUENCE [MRNA]</scope>
    <source>
        <tissue>Panicle</tissue>
    </source>
</reference>
<reference key="2">
    <citation type="journal article" date="2002" name="Nature">
        <title>The genome sequence and structure of rice chromosome 1.</title>
        <authorList>
            <person name="Sasaki T."/>
            <person name="Matsumoto T."/>
            <person name="Yamamoto K."/>
            <person name="Sakata K."/>
            <person name="Baba T."/>
            <person name="Katayose Y."/>
            <person name="Wu J."/>
            <person name="Niimura Y."/>
            <person name="Cheng Z."/>
            <person name="Nagamura Y."/>
            <person name="Antonio B.A."/>
            <person name="Kanamori H."/>
            <person name="Hosokawa S."/>
            <person name="Masukawa M."/>
            <person name="Arikawa K."/>
            <person name="Chiden Y."/>
            <person name="Hayashi M."/>
            <person name="Okamoto M."/>
            <person name="Ando T."/>
            <person name="Aoki H."/>
            <person name="Arita K."/>
            <person name="Hamada M."/>
            <person name="Harada C."/>
            <person name="Hijishita S."/>
            <person name="Honda M."/>
            <person name="Ichikawa Y."/>
            <person name="Idonuma A."/>
            <person name="Iijima M."/>
            <person name="Ikeda M."/>
            <person name="Ikeno M."/>
            <person name="Ito S."/>
            <person name="Ito T."/>
            <person name="Ito Y."/>
            <person name="Ito Y."/>
            <person name="Iwabuchi A."/>
            <person name="Kamiya K."/>
            <person name="Karasawa W."/>
            <person name="Katagiri S."/>
            <person name="Kikuta A."/>
            <person name="Kobayashi N."/>
            <person name="Kono I."/>
            <person name="Machita K."/>
            <person name="Maehara T."/>
            <person name="Mizuno H."/>
            <person name="Mizubayashi T."/>
            <person name="Mukai Y."/>
            <person name="Nagasaki H."/>
            <person name="Nakashima M."/>
            <person name="Nakama Y."/>
            <person name="Nakamichi Y."/>
            <person name="Nakamura M."/>
            <person name="Namiki N."/>
            <person name="Negishi M."/>
            <person name="Ohta I."/>
            <person name="Ono N."/>
            <person name="Saji S."/>
            <person name="Sakai K."/>
            <person name="Shibata M."/>
            <person name="Shimokawa T."/>
            <person name="Shomura A."/>
            <person name="Song J."/>
            <person name="Takazaki Y."/>
            <person name="Terasawa K."/>
            <person name="Tsuji K."/>
            <person name="Waki K."/>
            <person name="Yamagata H."/>
            <person name="Yamane H."/>
            <person name="Yoshiki S."/>
            <person name="Yoshihara R."/>
            <person name="Yukawa K."/>
            <person name="Zhong H."/>
            <person name="Iwama H."/>
            <person name="Endo T."/>
            <person name="Ito H."/>
            <person name="Hahn J.H."/>
            <person name="Kim H.-I."/>
            <person name="Eun M.-Y."/>
            <person name="Yano M."/>
            <person name="Jiang J."/>
            <person name="Gojobori T."/>
        </authorList>
    </citation>
    <scope>NUCLEOTIDE SEQUENCE [LARGE SCALE GENOMIC DNA]</scope>
    <source>
        <strain>cv. Nipponbare</strain>
    </source>
</reference>
<reference key="3">
    <citation type="journal article" date="2005" name="Nature">
        <title>The map-based sequence of the rice genome.</title>
        <authorList>
            <consortium name="International rice genome sequencing project (IRGSP)"/>
        </authorList>
    </citation>
    <scope>NUCLEOTIDE SEQUENCE [LARGE SCALE GENOMIC DNA]</scope>
    <source>
        <strain>cv. Nipponbare</strain>
    </source>
</reference>
<reference key="4">
    <citation type="journal article" date="2008" name="Nucleic Acids Res.">
        <title>The rice annotation project database (RAP-DB): 2008 update.</title>
        <authorList>
            <consortium name="The rice annotation project (RAP)"/>
        </authorList>
    </citation>
    <scope>GENOME REANNOTATION</scope>
    <source>
        <strain>cv. Nipponbare</strain>
    </source>
</reference>
<reference key="5">
    <citation type="journal article" date="2013" name="Rice">
        <title>Improvement of the Oryza sativa Nipponbare reference genome using next generation sequence and optical map data.</title>
        <authorList>
            <person name="Kawahara Y."/>
            <person name="de la Bastide M."/>
            <person name="Hamilton J.P."/>
            <person name="Kanamori H."/>
            <person name="McCombie W.R."/>
            <person name="Ouyang S."/>
            <person name="Schwartz D.C."/>
            <person name="Tanaka T."/>
            <person name="Wu J."/>
            <person name="Zhou S."/>
            <person name="Childs K.L."/>
            <person name="Davidson R.M."/>
            <person name="Lin H."/>
            <person name="Quesada-Ocampo L."/>
            <person name="Vaillancourt B."/>
            <person name="Sakai H."/>
            <person name="Lee S.S."/>
            <person name="Kim J."/>
            <person name="Numa H."/>
            <person name="Itoh T."/>
            <person name="Buell C.R."/>
            <person name="Matsumoto T."/>
        </authorList>
    </citation>
    <scope>GENOME REANNOTATION</scope>
    <source>
        <strain>cv. Nipponbare</strain>
    </source>
</reference>
<reference key="6">
    <citation type="journal article" date="2005" name="PLoS Biol.">
        <title>The genomes of Oryza sativa: a history of duplications.</title>
        <authorList>
            <person name="Yu J."/>
            <person name="Wang J."/>
            <person name="Lin W."/>
            <person name="Li S."/>
            <person name="Li H."/>
            <person name="Zhou J."/>
            <person name="Ni P."/>
            <person name="Dong W."/>
            <person name="Hu S."/>
            <person name="Zeng C."/>
            <person name="Zhang J."/>
            <person name="Zhang Y."/>
            <person name="Li R."/>
            <person name="Xu Z."/>
            <person name="Li S."/>
            <person name="Li X."/>
            <person name="Zheng H."/>
            <person name="Cong L."/>
            <person name="Lin L."/>
            <person name="Yin J."/>
            <person name="Geng J."/>
            <person name="Li G."/>
            <person name="Shi J."/>
            <person name="Liu J."/>
            <person name="Lv H."/>
            <person name="Li J."/>
            <person name="Wang J."/>
            <person name="Deng Y."/>
            <person name="Ran L."/>
            <person name="Shi X."/>
            <person name="Wang X."/>
            <person name="Wu Q."/>
            <person name="Li C."/>
            <person name="Ren X."/>
            <person name="Wang J."/>
            <person name="Wang X."/>
            <person name="Li D."/>
            <person name="Liu D."/>
            <person name="Zhang X."/>
            <person name="Ji Z."/>
            <person name="Zhao W."/>
            <person name="Sun Y."/>
            <person name="Zhang Z."/>
            <person name="Bao J."/>
            <person name="Han Y."/>
            <person name="Dong L."/>
            <person name="Ji J."/>
            <person name="Chen P."/>
            <person name="Wu S."/>
            <person name="Liu J."/>
            <person name="Xiao Y."/>
            <person name="Bu D."/>
            <person name="Tan J."/>
            <person name="Yang L."/>
            <person name="Ye C."/>
            <person name="Zhang J."/>
            <person name="Xu J."/>
            <person name="Zhou Y."/>
            <person name="Yu Y."/>
            <person name="Zhang B."/>
            <person name="Zhuang S."/>
            <person name="Wei H."/>
            <person name="Liu B."/>
            <person name="Lei M."/>
            <person name="Yu H."/>
            <person name="Li Y."/>
            <person name="Xu H."/>
            <person name="Wei S."/>
            <person name="He X."/>
            <person name="Fang L."/>
            <person name="Zhang Z."/>
            <person name="Zhang Y."/>
            <person name="Huang X."/>
            <person name="Su Z."/>
            <person name="Tong W."/>
            <person name="Li J."/>
            <person name="Tong Z."/>
            <person name="Li S."/>
            <person name="Ye J."/>
            <person name="Wang L."/>
            <person name="Fang L."/>
            <person name="Lei T."/>
            <person name="Chen C.-S."/>
            <person name="Chen H.-C."/>
            <person name="Xu Z."/>
            <person name="Li H."/>
            <person name="Huang H."/>
            <person name="Zhang F."/>
            <person name="Xu H."/>
            <person name="Li N."/>
            <person name="Zhao C."/>
            <person name="Li S."/>
            <person name="Dong L."/>
            <person name="Huang Y."/>
            <person name="Li L."/>
            <person name="Xi Y."/>
            <person name="Qi Q."/>
            <person name="Li W."/>
            <person name="Zhang B."/>
            <person name="Hu W."/>
            <person name="Zhang Y."/>
            <person name="Tian X."/>
            <person name="Jiao Y."/>
            <person name="Liang X."/>
            <person name="Jin J."/>
            <person name="Gao L."/>
            <person name="Zheng W."/>
            <person name="Hao B."/>
            <person name="Liu S.-M."/>
            <person name="Wang W."/>
            <person name="Yuan L."/>
            <person name="Cao M."/>
            <person name="McDermott J."/>
            <person name="Samudrala R."/>
            <person name="Wang J."/>
            <person name="Wong G.K.-S."/>
            <person name="Yang H."/>
        </authorList>
    </citation>
    <scope>NUCLEOTIDE SEQUENCE [LARGE SCALE GENOMIC DNA]</scope>
    <source>
        <strain>cv. Nipponbare</strain>
    </source>
</reference>
<reference key="7">
    <citation type="journal article" date="2020" name="New Phytol.">
        <title>A lamin-like protein OsNMCP1 regulates drought resistance and root growth through chromatin accessibility modulation by interacting with a chromatin remodeller OsSWI3C in rice.</title>
        <authorList>
            <person name="Yang J."/>
            <person name="Chang Y."/>
            <person name="Qin Y."/>
            <person name="Chen D."/>
            <person name="Zhu T."/>
            <person name="Peng K."/>
            <person name="Wang H."/>
            <person name="Tang N."/>
            <person name="Li X."/>
            <person name="Wang Y."/>
            <person name="Liu Y."/>
            <person name="Li X."/>
            <person name="Xie W."/>
            <person name="Xiong L."/>
        </authorList>
    </citation>
    <scope>FUNCTION</scope>
    <scope>INTERACTION WITH SWI3C</scope>
    <scope>SUBCELLULAR LOCATION</scope>
    <scope>INDUCTION</scope>
    <scope>DISRUPTION PHENOTYPE</scope>
</reference>
<feature type="chain" id="PRO_0000452400" description="Nuclear matrix constituent protein 1b">
    <location>
        <begin position="1"/>
        <end position="987"/>
    </location>
</feature>
<feature type="region of interest" description="Disordered" evidence="2">
    <location>
        <begin position="1"/>
        <end position="25"/>
    </location>
</feature>
<feature type="region of interest" description="Disordered" evidence="2">
    <location>
        <begin position="752"/>
        <end position="775"/>
    </location>
</feature>
<feature type="region of interest" description="Disordered" evidence="2">
    <location>
        <begin position="887"/>
        <end position="987"/>
    </location>
</feature>
<feature type="coiled-coil region" evidence="1">
    <location>
        <begin position="403"/>
        <end position="545"/>
    </location>
</feature>
<feature type="coiled-coil region" evidence="1">
    <location>
        <begin position="594"/>
        <end position="717"/>
    </location>
</feature>
<feature type="compositionally biased region" description="Gly residues" evidence="2">
    <location>
        <begin position="8"/>
        <end position="24"/>
    </location>
</feature>
<feature type="compositionally biased region" description="Basic and acidic residues" evidence="2">
    <location>
        <begin position="752"/>
        <end position="764"/>
    </location>
</feature>
<feature type="compositionally biased region" description="Basic and acidic residues" evidence="2">
    <location>
        <begin position="898"/>
        <end position="908"/>
    </location>
</feature>
<feature type="compositionally biased region" description="Polar residues" evidence="2">
    <location>
        <begin position="944"/>
        <end position="954"/>
    </location>
</feature>
<feature type="compositionally biased region" description="Acidic residues" evidence="2">
    <location>
        <begin position="956"/>
        <end position="973"/>
    </location>
</feature>